<accession>Q5KVI4</accession>
<keyword id="KW-0067">ATP-binding</keyword>
<keyword id="KW-0093">Biotin biosynthesis</keyword>
<keyword id="KW-0963">Cytoplasm</keyword>
<keyword id="KW-0436">Ligase</keyword>
<keyword id="KW-0460">Magnesium</keyword>
<keyword id="KW-0479">Metal-binding</keyword>
<keyword id="KW-0547">Nucleotide-binding</keyword>
<keyword id="KW-1185">Reference proteome</keyword>
<comment type="function">
    <text evidence="1">Catalyzes a mechanistically unusual reaction, the ATP-dependent insertion of CO2 between the N7 and N8 nitrogen atoms of 7,8-diaminopelargonic acid (DAPA, also called 7,8-diammoniononanoate) to form a ureido ring.</text>
</comment>
<comment type="catalytic activity">
    <reaction evidence="1">
        <text>(7R,8S)-7,8-diammoniononanoate + CO2 + ATP = (4R,5S)-dethiobiotin + ADP + phosphate + 3 H(+)</text>
        <dbReference type="Rhea" id="RHEA:15805"/>
        <dbReference type="ChEBI" id="CHEBI:15378"/>
        <dbReference type="ChEBI" id="CHEBI:16526"/>
        <dbReference type="ChEBI" id="CHEBI:30616"/>
        <dbReference type="ChEBI" id="CHEBI:43474"/>
        <dbReference type="ChEBI" id="CHEBI:149469"/>
        <dbReference type="ChEBI" id="CHEBI:149473"/>
        <dbReference type="ChEBI" id="CHEBI:456216"/>
        <dbReference type="EC" id="6.3.3.3"/>
    </reaction>
</comment>
<comment type="cofactor">
    <cofactor evidence="1">
        <name>Mg(2+)</name>
        <dbReference type="ChEBI" id="CHEBI:18420"/>
    </cofactor>
</comment>
<comment type="pathway">
    <text evidence="1">Cofactor biosynthesis; biotin biosynthesis; biotin from 7,8-diaminononanoate: step 1/2.</text>
</comment>
<comment type="subunit">
    <text evidence="1">Homodimer.</text>
</comment>
<comment type="subcellular location">
    <subcellularLocation>
        <location evidence="1">Cytoplasm</location>
    </subcellularLocation>
</comment>
<comment type="similarity">
    <text evidence="1">Belongs to the dethiobiotin synthetase family.</text>
</comment>
<feature type="chain" id="PRO_1000019560" description="ATP-dependent dethiobiotin synthetase BioD">
    <location>
        <begin position="1"/>
        <end position="238"/>
    </location>
</feature>
<feature type="active site" evidence="1">
    <location>
        <position position="38"/>
    </location>
</feature>
<feature type="binding site" evidence="1">
    <location>
        <begin position="13"/>
        <end position="18"/>
    </location>
    <ligand>
        <name>ATP</name>
        <dbReference type="ChEBI" id="CHEBI:30616"/>
    </ligand>
</feature>
<feature type="binding site" evidence="1">
    <location>
        <position position="17"/>
    </location>
    <ligand>
        <name>Mg(2+)</name>
        <dbReference type="ChEBI" id="CHEBI:18420"/>
    </ligand>
</feature>
<feature type="binding site" evidence="1">
    <location>
        <position position="42"/>
    </location>
    <ligand>
        <name>substrate</name>
    </ligand>
</feature>
<feature type="binding site" evidence="1">
    <location>
        <position position="59"/>
    </location>
    <ligand>
        <name>Mg(2+)</name>
        <dbReference type="ChEBI" id="CHEBI:18420"/>
    </ligand>
</feature>
<feature type="binding site" evidence="1">
    <location>
        <begin position="111"/>
        <end position="114"/>
    </location>
    <ligand>
        <name>ATP</name>
        <dbReference type="ChEBI" id="CHEBI:30616"/>
    </ligand>
</feature>
<feature type="binding site" evidence="1">
    <location>
        <position position="111"/>
    </location>
    <ligand>
        <name>Mg(2+)</name>
        <dbReference type="ChEBI" id="CHEBI:18420"/>
    </ligand>
</feature>
<feature type="binding site" evidence="1">
    <location>
        <begin position="175"/>
        <end position="176"/>
    </location>
    <ligand>
        <name>ATP</name>
        <dbReference type="ChEBI" id="CHEBI:30616"/>
    </ligand>
</feature>
<feature type="binding site" evidence="1">
    <location>
        <begin position="204"/>
        <end position="206"/>
    </location>
    <ligand>
        <name>ATP</name>
        <dbReference type="ChEBI" id="CHEBI:30616"/>
    </ligand>
</feature>
<dbReference type="EC" id="6.3.3.3" evidence="1"/>
<dbReference type="EMBL" id="BA000043">
    <property type="protein sequence ID" value="BAD77302.1"/>
    <property type="molecule type" value="Genomic_DNA"/>
</dbReference>
<dbReference type="RefSeq" id="WP_011232487.1">
    <property type="nucleotide sequence ID" value="NC_006510.1"/>
</dbReference>
<dbReference type="SMR" id="Q5KVI4"/>
<dbReference type="STRING" id="235909.GK3017"/>
<dbReference type="GeneID" id="32064893"/>
<dbReference type="KEGG" id="gka:GK3017"/>
<dbReference type="eggNOG" id="COG0132">
    <property type="taxonomic scope" value="Bacteria"/>
</dbReference>
<dbReference type="HOGENOM" id="CLU_072551_3_0_9"/>
<dbReference type="UniPathway" id="UPA00078">
    <property type="reaction ID" value="UER00161"/>
</dbReference>
<dbReference type="Proteomes" id="UP000001172">
    <property type="component" value="Chromosome"/>
</dbReference>
<dbReference type="GO" id="GO:0005829">
    <property type="term" value="C:cytosol"/>
    <property type="evidence" value="ECO:0007669"/>
    <property type="project" value="TreeGrafter"/>
</dbReference>
<dbReference type="GO" id="GO:0005524">
    <property type="term" value="F:ATP binding"/>
    <property type="evidence" value="ECO:0007669"/>
    <property type="project" value="UniProtKB-UniRule"/>
</dbReference>
<dbReference type="GO" id="GO:0004141">
    <property type="term" value="F:dethiobiotin synthase activity"/>
    <property type="evidence" value="ECO:0007669"/>
    <property type="project" value="UniProtKB-UniRule"/>
</dbReference>
<dbReference type="GO" id="GO:0000287">
    <property type="term" value="F:magnesium ion binding"/>
    <property type="evidence" value="ECO:0007669"/>
    <property type="project" value="UniProtKB-UniRule"/>
</dbReference>
<dbReference type="GO" id="GO:0009102">
    <property type="term" value="P:biotin biosynthetic process"/>
    <property type="evidence" value="ECO:0007669"/>
    <property type="project" value="UniProtKB-UniRule"/>
</dbReference>
<dbReference type="CDD" id="cd03109">
    <property type="entry name" value="DTBS"/>
    <property type="match status" value="1"/>
</dbReference>
<dbReference type="Gene3D" id="3.40.50.300">
    <property type="entry name" value="P-loop containing nucleotide triphosphate hydrolases"/>
    <property type="match status" value="1"/>
</dbReference>
<dbReference type="HAMAP" id="MF_00336">
    <property type="entry name" value="BioD"/>
    <property type="match status" value="1"/>
</dbReference>
<dbReference type="InterPro" id="IPR004472">
    <property type="entry name" value="DTB_synth_BioD"/>
</dbReference>
<dbReference type="InterPro" id="IPR027417">
    <property type="entry name" value="P-loop_NTPase"/>
</dbReference>
<dbReference type="NCBIfam" id="TIGR00347">
    <property type="entry name" value="bioD"/>
    <property type="match status" value="1"/>
</dbReference>
<dbReference type="PANTHER" id="PTHR43210:SF2">
    <property type="entry name" value="ATP-DEPENDENT DETHIOBIOTIN SYNTHETASE BIOD 2"/>
    <property type="match status" value="1"/>
</dbReference>
<dbReference type="PANTHER" id="PTHR43210">
    <property type="entry name" value="DETHIOBIOTIN SYNTHETASE"/>
    <property type="match status" value="1"/>
</dbReference>
<dbReference type="Pfam" id="PF13500">
    <property type="entry name" value="AAA_26"/>
    <property type="match status" value="1"/>
</dbReference>
<dbReference type="PIRSF" id="PIRSF006755">
    <property type="entry name" value="DTB_synth"/>
    <property type="match status" value="1"/>
</dbReference>
<dbReference type="SUPFAM" id="SSF52540">
    <property type="entry name" value="P-loop containing nucleoside triphosphate hydrolases"/>
    <property type="match status" value="1"/>
</dbReference>
<sequence>MGQAIFMTGTGTEIGKTVVTSIVALALERLGMSVSVLKPVQTGLAEDGVSFAEQYWYERVAKLSASEGMYYMEPAMSPHLAAKLTGTSIEPERVAERLEWLKQRYDVVLVEGAGGLAVPWCERDGRFYMTSDFLRDYQLPAILVSLSSLGAIHHAVTTAAYADAQGIRLLGLMFNQFQEQEIIHQNNVETIAALLRLPVLAVVPLLPAVSRRELETLAQHWIEQGKAKQLLEVLGVGV</sequence>
<reference key="1">
    <citation type="journal article" date="2004" name="Nucleic Acids Res.">
        <title>Thermoadaptation trait revealed by the genome sequence of thermophilic Geobacillus kaustophilus.</title>
        <authorList>
            <person name="Takami H."/>
            <person name="Takaki Y."/>
            <person name="Chee G.-J."/>
            <person name="Nishi S."/>
            <person name="Shimamura S."/>
            <person name="Suzuki H."/>
            <person name="Matsui S."/>
            <person name="Uchiyama I."/>
        </authorList>
    </citation>
    <scope>NUCLEOTIDE SEQUENCE [LARGE SCALE GENOMIC DNA]</scope>
    <source>
        <strain>HTA426</strain>
    </source>
</reference>
<protein>
    <recommendedName>
        <fullName evidence="1">ATP-dependent dethiobiotin synthetase BioD</fullName>
        <ecNumber evidence="1">6.3.3.3</ecNumber>
    </recommendedName>
    <alternativeName>
        <fullName evidence="1">DTB synthetase</fullName>
        <shortName evidence="1">DTBS</shortName>
    </alternativeName>
    <alternativeName>
        <fullName evidence="1">Dethiobiotin synthase</fullName>
    </alternativeName>
</protein>
<name>BIOD_GEOKA</name>
<evidence type="ECO:0000255" key="1">
    <source>
        <dbReference type="HAMAP-Rule" id="MF_00336"/>
    </source>
</evidence>
<proteinExistence type="inferred from homology"/>
<organism>
    <name type="scientific">Geobacillus kaustophilus (strain HTA426)</name>
    <dbReference type="NCBI Taxonomy" id="235909"/>
    <lineage>
        <taxon>Bacteria</taxon>
        <taxon>Bacillati</taxon>
        <taxon>Bacillota</taxon>
        <taxon>Bacilli</taxon>
        <taxon>Bacillales</taxon>
        <taxon>Anoxybacillaceae</taxon>
        <taxon>Geobacillus</taxon>
        <taxon>Geobacillus thermoleovorans group</taxon>
    </lineage>
</organism>
<gene>
    <name evidence="1" type="primary">bioD</name>
    <name type="ordered locus">GK3017</name>
</gene>